<dbReference type="EMBL" id="AK007707">
    <property type="protein sequence ID" value="BAB25202.1"/>
    <property type="molecule type" value="mRNA"/>
</dbReference>
<dbReference type="EMBL" id="AK050027">
    <property type="protein sequence ID" value="BAC34036.1"/>
    <property type="molecule type" value="mRNA"/>
</dbReference>
<dbReference type="EMBL" id="AK077277">
    <property type="protein sequence ID" value="BAC36725.1"/>
    <property type="molecule type" value="mRNA"/>
</dbReference>
<dbReference type="EMBL" id="AK150936">
    <property type="protein sequence ID" value="BAE29971.1"/>
    <property type="molecule type" value="mRNA"/>
</dbReference>
<dbReference type="EMBL" id="AL645847">
    <property type="status" value="NOT_ANNOTATED_CDS"/>
    <property type="molecule type" value="Genomic_DNA"/>
</dbReference>
<dbReference type="EMBL" id="BC115504">
    <property type="protein sequence ID" value="AAI15505.1"/>
    <property type="molecule type" value="mRNA"/>
</dbReference>
<dbReference type="EMBL" id="BC115505">
    <property type="protein sequence ID" value="AAI15506.1"/>
    <property type="molecule type" value="mRNA"/>
</dbReference>
<dbReference type="CCDS" id="CCDS24834.1"/>
<dbReference type="RefSeq" id="NP_080486.1">
    <property type="nucleotide sequence ID" value="NM_026210.5"/>
</dbReference>
<dbReference type="BioGRID" id="212238">
    <property type="interactions" value="2"/>
</dbReference>
<dbReference type="FunCoup" id="Q9D8T4">
    <property type="interactions" value="2336"/>
</dbReference>
<dbReference type="STRING" id="10090.ENSMUSP00000014321"/>
<dbReference type="iPTMnet" id="Q9D8T4"/>
<dbReference type="PhosphoSitePlus" id="Q9D8T4"/>
<dbReference type="SwissPalm" id="Q9D8T4"/>
<dbReference type="jPOST" id="Q9D8T4"/>
<dbReference type="PaxDb" id="10090-ENSMUSP00000014321"/>
<dbReference type="PeptideAtlas" id="Q9D8T4"/>
<dbReference type="ProteomicsDB" id="300065"/>
<dbReference type="DNASU" id="67510"/>
<dbReference type="Ensembl" id="ENSMUST00000014321.5">
    <property type="protein sequence ID" value="ENSMUSP00000014321.5"/>
    <property type="gene ID" value="ENSMUSG00000014177.11"/>
</dbReference>
<dbReference type="GeneID" id="67510"/>
<dbReference type="KEGG" id="mmu:67510"/>
<dbReference type="UCSC" id="uc007jkh.1">
    <property type="organism name" value="mouse"/>
</dbReference>
<dbReference type="AGR" id="MGI:1914760"/>
<dbReference type="CTD" id="51030"/>
<dbReference type="MGI" id="MGI:1914760">
    <property type="gene designation" value="Tvp23b"/>
</dbReference>
<dbReference type="VEuPathDB" id="HostDB:ENSMUSG00000014177"/>
<dbReference type="eggNOG" id="KOG3195">
    <property type="taxonomic scope" value="Eukaryota"/>
</dbReference>
<dbReference type="GeneTree" id="ENSGT00390000004428"/>
<dbReference type="HOGENOM" id="CLU_074845_3_0_1"/>
<dbReference type="InParanoid" id="Q9D8T4"/>
<dbReference type="OMA" id="FEWMIVA"/>
<dbReference type="OrthoDB" id="2151161at2759"/>
<dbReference type="PhylomeDB" id="Q9D8T4"/>
<dbReference type="TreeFam" id="TF312906"/>
<dbReference type="BioGRID-ORCS" id="67510">
    <property type="hits" value="3 hits in 79 CRISPR screens"/>
</dbReference>
<dbReference type="ChiTaRS" id="Tvp23b">
    <property type="organism name" value="mouse"/>
</dbReference>
<dbReference type="PRO" id="PR:Q9D8T4"/>
<dbReference type="Proteomes" id="UP000000589">
    <property type="component" value="Chromosome 11"/>
</dbReference>
<dbReference type="RNAct" id="Q9D8T4">
    <property type="molecule type" value="protein"/>
</dbReference>
<dbReference type="Bgee" id="ENSMUSG00000014177">
    <property type="expression patterns" value="Expressed in otolith organ and 222 other cell types or tissues"/>
</dbReference>
<dbReference type="GO" id="GO:0016020">
    <property type="term" value="C:membrane"/>
    <property type="evidence" value="ECO:0007669"/>
    <property type="project" value="UniProtKB-SubCell"/>
</dbReference>
<dbReference type="InterPro" id="IPR008564">
    <property type="entry name" value="TVP23-like"/>
</dbReference>
<dbReference type="PANTHER" id="PTHR13019">
    <property type="entry name" value="GOLGI APPARATUS MEMBRANE PROTEIN TVP23"/>
    <property type="match status" value="1"/>
</dbReference>
<dbReference type="PANTHER" id="PTHR13019:SF9">
    <property type="entry name" value="GOLGI APPARATUS MEMBRANE PROTEIN TVP23 HOMOLOG B"/>
    <property type="match status" value="1"/>
</dbReference>
<dbReference type="Pfam" id="PF05832">
    <property type="entry name" value="DUF846"/>
    <property type="match status" value="1"/>
</dbReference>
<comment type="subcellular location">
    <subcellularLocation>
        <location evidence="3">Membrane</location>
        <topology evidence="3">Multi-pass membrane protein</topology>
    </subcellularLocation>
</comment>
<comment type="similarity">
    <text evidence="3">Belongs to the TVP23 family.</text>
</comment>
<proteinExistence type="evidence at protein level"/>
<reference key="1">
    <citation type="journal article" date="2005" name="Science">
        <title>The transcriptional landscape of the mammalian genome.</title>
        <authorList>
            <person name="Carninci P."/>
            <person name="Kasukawa T."/>
            <person name="Katayama S."/>
            <person name="Gough J."/>
            <person name="Frith M.C."/>
            <person name="Maeda N."/>
            <person name="Oyama R."/>
            <person name="Ravasi T."/>
            <person name="Lenhard B."/>
            <person name="Wells C."/>
            <person name="Kodzius R."/>
            <person name="Shimokawa K."/>
            <person name="Bajic V.B."/>
            <person name="Brenner S.E."/>
            <person name="Batalov S."/>
            <person name="Forrest A.R."/>
            <person name="Zavolan M."/>
            <person name="Davis M.J."/>
            <person name="Wilming L.G."/>
            <person name="Aidinis V."/>
            <person name="Allen J.E."/>
            <person name="Ambesi-Impiombato A."/>
            <person name="Apweiler R."/>
            <person name="Aturaliya R.N."/>
            <person name="Bailey T.L."/>
            <person name="Bansal M."/>
            <person name="Baxter L."/>
            <person name="Beisel K.W."/>
            <person name="Bersano T."/>
            <person name="Bono H."/>
            <person name="Chalk A.M."/>
            <person name="Chiu K.P."/>
            <person name="Choudhary V."/>
            <person name="Christoffels A."/>
            <person name="Clutterbuck D.R."/>
            <person name="Crowe M.L."/>
            <person name="Dalla E."/>
            <person name="Dalrymple B.P."/>
            <person name="de Bono B."/>
            <person name="Della Gatta G."/>
            <person name="di Bernardo D."/>
            <person name="Down T."/>
            <person name="Engstrom P."/>
            <person name="Fagiolini M."/>
            <person name="Faulkner G."/>
            <person name="Fletcher C.F."/>
            <person name="Fukushima T."/>
            <person name="Furuno M."/>
            <person name="Futaki S."/>
            <person name="Gariboldi M."/>
            <person name="Georgii-Hemming P."/>
            <person name="Gingeras T.R."/>
            <person name="Gojobori T."/>
            <person name="Green R.E."/>
            <person name="Gustincich S."/>
            <person name="Harbers M."/>
            <person name="Hayashi Y."/>
            <person name="Hensch T.K."/>
            <person name="Hirokawa N."/>
            <person name="Hill D."/>
            <person name="Huminiecki L."/>
            <person name="Iacono M."/>
            <person name="Ikeo K."/>
            <person name="Iwama A."/>
            <person name="Ishikawa T."/>
            <person name="Jakt M."/>
            <person name="Kanapin A."/>
            <person name="Katoh M."/>
            <person name="Kawasawa Y."/>
            <person name="Kelso J."/>
            <person name="Kitamura H."/>
            <person name="Kitano H."/>
            <person name="Kollias G."/>
            <person name="Krishnan S.P."/>
            <person name="Kruger A."/>
            <person name="Kummerfeld S.K."/>
            <person name="Kurochkin I.V."/>
            <person name="Lareau L.F."/>
            <person name="Lazarevic D."/>
            <person name="Lipovich L."/>
            <person name="Liu J."/>
            <person name="Liuni S."/>
            <person name="McWilliam S."/>
            <person name="Madan Babu M."/>
            <person name="Madera M."/>
            <person name="Marchionni L."/>
            <person name="Matsuda H."/>
            <person name="Matsuzawa S."/>
            <person name="Miki H."/>
            <person name="Mignone F."/>
            <person name="Miyake S."/>
            <person name="Morris K."/>
            <person name="Mottagui-Tabar S."/>
            <person name="Mulder N."/>
            <person name="Nakano N."/>
            <person name="Nakauchi H."/>
            <person name="Ng P."/>
            <person name="Nilsson R."/>
            <person name="Nishiguchi S."/>
            <person name="Nishikawa S."/>
            <person name="Nori F."/>
            <person name="Ohara O."/>
            <person name="Okazaki Y."/>
            <person name="Orlando V."/>
            <person name="Pang K.C."/>
            <person name="Pavan W.J."/>
            <person name="Pavesi G."/>
            <person name="Pesole G."/>
            <person name="Petrovsky N."/>
            <person name="Piazza S."/>
            <person name="Reed J."/>
            <person name="Reid J.F."/>
            <person name="Ring B.Z."/>
            <person name="Ringwald M."/>
            <person name="Rost B."/>
            <person name="Ruan Y."/>
            <person name="Salzberg S.L."/>
            <person name="Sandelin A."/>
            <person name="Schneider C."/>
            <person name="Schoenbach C."/>
            <person name="Sekiguchi K."/>
            <person name="Semple C.A."/>
            <person name="Seno S."/>
            <person name="Sessa L."/>
            <person name="Sheng Y."/>
            <person name="Shibata Y."/>
            <person name="Shimada H."/>
            <person name="Shimada K."/>
            <person name="Silva D."/>
            <person name="Sinclair B."/>
            <person name="Sperling S."/>
            <person name="Stupka E."/>
            <person name="Sugiura K."/>
            <person name="Sultana R."/>
            <person name="Takenaka Y."/>
            <person name="Taki K."/>
            <person name="Tammoja K."/>
            <person name="Tan S.L."/>
            <person name="Tang S."/>
            <person name="Taylor M.S."/>
            <person name="Tegner J."/>
            <person name="Teichmann S.A."/>
            <person name="Ueda H.R."/>
            <person name="van Nimwegen E."/>
            <person name="Verardo R."/>
            <person name="Wei C.L."/>
            <person name="Yagi K."/>
            <person name="Yamanishi H."/>
            <person name="Zabarovsky E."/>
            <person name="Zhu S."/>
            <person name="Zimmer A."/>
            <person name="Hide W."/>
            <person name="Bult C."/>
            <person name="Grimmond S.M."/>
            <person name="Teasdale R.D."/>
            <person name="Liu E.T."/>
            <person name="Brusic V."/>
            <person name="Quackenbush J."/>
            <person name="Wahlestedt C."/>
            <person name="Mattick J.S."/>
            <person name="Hume D.A."/>
            <person name="Kai C."/>
            <person name="Sasaki D."/>
            <person name="Tomaru Y."/>
            <person name="Fukuda S."/>
            <person name="Kanamori-Katayama M."/>
            <person name="Suzuki M."/>
            <person name="Aoki J."/>
            <person name="Arakawa T."/>
            <person name="Iida J."/>
            <person name="Imamura K."/>
            <person name="Itoh M."/>
            <person name="Kato T."/>
            <person name="Kawaji H."/>
            <person name="Kawagashira N."/>
            <person name="Kawashima T."/>
            <person name="Kojima M."/>
            <person name="Kondo S."/>
            <person name="Konno H."/>
            <person name="Nakano K."/>
            <person name="Ninomiya N."/>
            <person name="Nishio T."/>
            <person name="Okada M."/>
            <person name="Plessy C."/>
            <person name="Shibata K."/>
            <person name="Shiraki T."/>
            <person name="Suzuki S."/>
            <person name="Tagami M."/>
            <person name="Waki K."/>
            <person name="Watahiki A."/>
            <person name="Okamura-Oho Y."/>
            <person name="Suzuki H."/>
            <person name="Kawai J."/>
            <person name="Hayashizaki Y."/>
        </authorList>
    </citation>
    <scope>NUCLEOTIDE SEQUENCE [LARGE SCALE MRNA]</scope>
    <source>
        <strain>C57BL/6J</strain>
        <tissue>Bone marrow macrophage</tissue>
        <tissue>Liver</tissue>
        <tissue>Ovary</tissue>
        <tissue>Pancreas</tissue>
        <tissue>Uterus</tissue>
    </source>
</reference>
<reference key="2">
    <citation type="journal article" date="2009" name="PLoS Biol.">
        <title>Lineage-specific biology revealed by a finished genome assembly of the mouse.</title>
        <authorList>
            <person name="Church D.M."/>
            <person name="Goodstadt L."/>
            <person name="Hillier L.W."/>
            <person name="Zody M.C."/>
            <person name="Goldstein S."/>
            <person name="She X."/>
            <person name="Bult C.J."/>
            <person name="Agarwala R."/>
            <person name="Cherry J.L."/>
            <person name="DiCuccio M."/>
            <person name="Hlavina W."/>
            <person name="Kapustin Y."/>
            <person name="Meric P."/>
            <person name="Maglott D."/>
            <person name="Birtle Z."/>
            <person name="Marques A.C."/>
            <person name="Graves T."/>
            <person name="Zhou S."/>
            <person name="Teague B."/>
            <person name="Potamousis K."/>
            <person name="Churas C."/>
            <person name="Place M."/>
            <person name="Herschleb J."/>
            <person name="Runnheim R."/>
            <person name="Forrest D."/>
            <person name="Amos-Landgraf J."/>
            <person name="Schwartz D.C."/>
            <person name="Cheng Z."/>
            <person name="Lindblad-Toh K."/>
            <person name="Eichler E.E."/>
            <person name="Ponting C.P."/>
        </authorList>
    </citation>
    <scope>NUCLEOTIDE SEQUENCE [LARGE SCALE GENOMIC DNA]</scope>
    <source>
        <strain>C57BL/6J</strain>
    </source>
</reference>
<reference key="3">
    <citation type="journal article" date="2004" name="Genome Res.">
        <title>The status, quality, and expansion of the NIH full-length cDNA project: the Mammalian Gene Collection (MGC).</title>
        <authorList>
            <consortium name="The MGC Project Team"/>
        </authorList>
    </citation>
    <scope>NUCLEOTIDE SEQUENCE [LARGE SCALE MRNA]</scope>
</reference>
<reference key="4">
    <citation type="journal article" date="2007" name="Proc. Natl. Acad. Sci. U.S.A.">
        <title>Large-scale phosphorylation analysis of mouse liver.</title>
        <authorList>
            <person name="Villen J."/>
            <person name="Beausoleil S.A."/>
            <person name="Gerber S.A."/>
            <person name="Gygi S.P."/>
        </authorList>
    </citation>
    <scope>ACETYLATION [LARGE SCALE ANALYSIS] AT MET-1</scope>
    <scope>IDENTIFICATION BY MASS SPECTROMETRY [LARGE SCALE ANALYSIS]</scope>
    <source>
        <tissue>Liver</tissue>
    </source>
</reference>
<sequence length="205" mass="23305">MLSQDSNDDTEDVSLFDAEEETTNRPRKSKIRHPVASFFHLFFRVSAVVVYLLCELLSSSFIACMVTIILLLSCDFWAVKNVTGRLMVGLRWWNHIDEDGKSHWVFESRKSTPQDNKTISEAESRIFWLGLIACPVLWVIFAFSALFSFRVKWLAVVIMGVVLQGANLYGYIRCKVGSKKNLTSMATSYLGKQFLRQNTGDGQTS</sequence>
<gene>
    <name type="primary">Tvp23b</name>
    <name type="synonym">Fam18b</name>
    <name type="synonym">Fam18b1</name>
</gene>
<feature type="chain" id="PRO_0000212829" description="Golgi apparatus membrane protein TVP23 homolog B">
    <location>
        <begin position="1"/>
        <end position="205"/>
    </location>
</feature>
<feature type="transmembrane region" description="Helical" evidence="1">
    <location>
        <begin position="34"/>
        <end position="53"/>
    </location>
</feature>
<feature type="transmembrane region" description="Helical" evidence="1">
    <location>
        <begin position="54"/>
        <end position="72"/>
    </location>
</feature>
<feature type="transmembrane region" description="Helical" evidence="1">
    <location>
        <begin position="126"/>
        <end position="146"/>
    </location>
</feature>
<feature type="transmembrane region" description="Helical" evidence="1">
    <location>
        <begin position="152"/>
        <end position="172"/>
    </location>
</feature>
<feature type="region of interest" description="Disordered" evidence="2">
    <location>
        <begin position="1"/>
        <end position="27"/>
    </location>
</feature>
<feature type="compositionally biased region" description="Acidic residues" evidence="2">
    <location>
        <begin position="1"/>
        <end position="21"/>
    </location>
</feature>
<feature type="modified residue" description="N-acetylmethionine" evidence="4">
    <location>
        <position position="1"/>
    </location>
</feature>
<organism>
    <name type="scientific">Mus musculus</name>
    <name type="common">Mouse</name>
    <dbReference type="NCBI Taxonomy" id="10090"/>
    <lineage>
        <taxon>Eukaryota</taxon>
        <taxon>Metazoa</taxon>
        <taxon>Chordata</taxon>
        <taxon>Craniata</taxon>
        <taxon>Vertebrata</taxon>
        <taxon>Euteleostomi</taxon>
        <taxon>Mammalia</taxon>
        <taxon>Eutheria</taxon>
        <taxon>Euarchontoglires</taxon>
        <taxon>Glires</taxon>
        <taxon>Rodentia</taxon>
        <taxon>Myomorpha</taxon>
        <taxon>Muroidea</taxon>
        <taxon>Muridae</taxon>
        <taxon>Murinae</taxon>
        <taxon>Mus</taxon>
        <taxon>Mus</taxon>
    </lineage>
</organism>
<protein>
    <recommendedName>
        <fullName>Golgi apparatus membrane protein TVP23 homolog B</fullName>
    </recommendedName>
</protein>
<keyword id="KW-0007">Acetylation</keyword>
<keyword id="KW-0472">Membrane</keyword>
<keyword id="KW-1185">Reference proteome</keyword>
<keyword id="KW-0812">Transmembrane</keyword>
<keyword id="KW-1133">Transmembrane helix</keyword>
<accession>Q9D8T4</accession>
<accession>Q3UBJ3</accession>
<name>TV23B_MOUSE</name>
<evidence type="ECO:0000255" key="1"/>
<evidence type="ECO:0000256" key="2">
    <source>
        <dbReference type="SAM" id="MobiDB-lite"/>
    </source>
</evidence>
<evidence type="ECO:0000305" key="3"/>
<evidence type="ECO:0007744" key="4">
    <source>
    </source>
</evidence>